<feature type="chain" id="PRO_1000166195" description="Large ribosomal subunit protein bL25">
    <location>
        <begin position="1"/>
        <end position="95"/>
    </location>
</feature>
<reference key="1">
    <citation type="submission" date="2008-12" db="EMBL/GenBank/DDBJ databases">
        <title>Complete sequence of chromosome of Shewanella baltica OS223.</title>
        <authorList>
            <consortium name="US DOE Joint Genome Institute"/>
            <person name="Lucas S."/>
            <person name="Copeland A."/>
            <person name="Lapidus A."/>
            <person name="Glavina del Rio T."/>
            <person name="Dalin E."/>
            <person name="Tice H."/>
            <person name="Bruce D."/>
            <person name="Goodwin L."/>
            <person name="Pitluck S."/>
            <person name="Chertkov O."/>
            <person name="Meincke L."/>
            <person name="Brettin T."/>
            <person name="Detter J.C."/>
            <person name="Han C."/>
            <person name="Kuske C.R."/>
            <person name="Larimer F."/>
            <person name="Land M."/>
            <person name="Hauser L."/>
            <person name="Kyrpides N."/>
            <person name="Ovchinnikova G."/>
            <person name="Brettar I."/>
            <person name="Rodrigues J."/>
            <person name="Konstantinidis K."/>
            <person name="Tiedje J."/>
        </authorList>
    </citation>
    <scope>NUCLEOTIDE SEQUENCE [LARGE SCALE GENOMIC DNA]</scope>
    <source>
        <strain>OS223</strain>
    </source>
</reference>
<proteinExistence type="inferred from homology"/>
<protein>
    <recommendedName>
        <fullName evidence="1">Large ribosomal subunit protein bL25</fullName>
    </recommendedName>
    <alternativeName>
        <fullName evidence="2">50S ribosomal protein L25</fullName>
    </alternativeName>
</protein>
<keyword id="KW-0687">Ribonucleoprotein</keyword>
<keyword id="KW-0689">Ribosomal protein</keyword>
<keyword id="KW-0694">RNA-binding</keyword>
<keyword id="KW-0699">rRNA-binding</keyword>
<organism>
    <name type="scientific">Shewanella baltica (strain OS223)</name>
    <dbReference type="NCBI Taxonomy" id="407976"/>
    <lineage>
        <taxon>Bacteria</taxon>
        <taxon>Pseudomonadati</taxon>
        <taxon>Pseudomonadota</taxon>
        <taxon>Gammaproteobacteria</taxon>
        <taxon>Alteromonadales</taxon>
        <taxon>Shewanellaceae</taxon>
        <taxon>Shewanella</taxon>
    </lineage>
</organism>
<evidence type="ECO:0000255" key="1">
    <source>
        <dbReference type="HAMAP-Rule" id="MF_01336"/>
    </source>
</evidence>
<evidence type="ECO:0000305" key="2"/>
<comment type="function">
    <text evidence="1">This is one of the proteins that binds to the 5S RNA in the ribosome where it forms part of the central protuberance.</text>
</comment>
<comment type="subunit">
    <text evidence="1">Part of the 50S ribosomal subunit; part of the 5S rRNA/L5/L18/L25 subcomplex. Contacts the 5S rRNA. Binds to the 5S rRNA independently of L5 and L18.</text>
</comment>
<comment type="similarity">
    <text evidence="1">Belongs to the bacterial ribosomal protein bL25 family.</text>
</comment>
<sequence>MSYTIQAQTRTEIGKGSSRRLRHAGKVPAVIYGQGKEPVSIVFDHKDIINIQANADFYTSTLTIVVDGKEVGVRAQAMQRHVFKPLIEHVDFVYA</sequence>
<dbReference type="EMBL" id="CP001252">
    <property type="protein sequence ID" value="ACK46887.1"/>
    <property type="molecule type" value="Genomic_DNA"/>
</dbReference>
<dbReference type="RefSeq" id="WP_006081398.1">
    <property type="nucleotide sequence ID" value="NC_011663.1"/>
</dbReference>
<dbReference type="SMR" id="B8E7C8"/>
<dbReference type="GeneID" id="11772134"/>
<dbReference type="KEGG" id="sbp:Sbal223_2392"/>
<dbReference type="HOGENOM" id="CLU_137946_0_0_6"/>
<dbReference type="Proteomes" id="UP000002507">
    <property type="component" value="Chromosome"/>
</dbReference>
<dbReference type="GO" id="GO:0022625">
    <property type="term" value="C:cytosolic large ribosomal subunit"/>
    <property type="evidence" value="ECO:0007669"/>
    <property type="project" value="TreeGrafter"/>
</dbReference>
<dbReference type="GO" id="GO:0008097">
    <property type="term" value="F:5S rRNA binding"/>
    <property type="evidence" value="ECO:0007669"/>
    <property type="project" value="InterPro"/>
</dbReference>
<dbReference type="GO" id="GO:0003735">
    <property type="term" value="F:structural constituent of ribosome"/>
    <property type="evidence" value="ECO:0007669"/>
    <property type="project" value="InterPro"/>
</dbReference>
<dbReference type="GO" id="GO:0006412">
    <property type="term" value="P:translation"/>
    <property type="evidence" value="ECO:0007669"/>
    <property type="project" value="UniProtKB-UniRule"/>
</dbReference>
<dbReference type="CDD" id="cd00495">
    <property type="entry name" value="Ribosomal_L25_TL5_CTC"/>
    <property type="match status" value="1"/>
</dbReference>
<dbReference type="FunFam" id="2.40.240.10:FF:000002">
    <property type="entry name" value="50S ribosomal protein L25"/>
    <property type="match status" value="1"/>
</dbReference>
<dbReference type="Gene3D" id="2.40.240.10">
    <property type="entry name" value="Ribosomal Protein L25, Chain P"/>
    <property type="match status" value="1"/>
</dbReference>
<dbReference type="HAMAP" id="MF_01336">
    <property type="entry name" value="Ribosomal_bL25"/>
    <property type="match status" value="1"/>
</dbReference>
<dbReference type="InterPro" id="IPR020056">
    <property type="entry name" value="Rbsml_bL25/Gln-tRNA_synth_N"/>
</dbReference>
<dbReference type="InterPro" id="IPR011035">
    <property type="entry name" value="Ribosomal_bL25/Gln-tRNA_synth"/>
</dbReference>
<dbReference type="InterPro" id="IPR001021">
    <property type="entry name" value="Ribosomal_bL25_long"/>
</dbReference>
<dbReference type="InterPro" id="IPR020055">
    <property type="entry name" value="Ribosomal_bL25_short"/>
</dbReference>
<dbReference type="InterPro" id="IPR029751">
    <property type="entry name" value="Ribosomal_L25_dom"/>
</dbReference>
<dbReference type="InterPro" id="IPR020930">
    <property type="entry name" value="Ribosomal_uL5_bac-type"/>
</dbReference>
<dbReference type="NCBIfam" id="TIGR00731">
    <property type="entry name" value="bL25_bact_ctc"/>
    <property type="match status" value="1"/>
</dbReference>
<dbReference type="NCBIfam" id="NF004612">
    <property type="entry name" value="PRK05943.1"/>
    <property type="match status" value="1"/>
</dbReference>
<dbReference type="PANTHER" id="PTHR33284">
    <property type="entry name" value="RIBOSOMAL PROTEIN L25/GLN-TRNA SYNTHETASE, ANTI-CODON-BINDING DOMAIN-CONTAINING PROTEIN"/>
    <property type="match status" value="1"/>
</dbReference>
<dbReference type="PANTHER" id="PTHR33284:SF1">
    <property type="entry name" value="RIBOSOMAL PROTEIN L25_GLN-TRNA SYNTHETASE, ANTI-CODON-BINDING DOMAIN-CONTAINING PROTEIN"/>
    <property type="match status" value="1"/>
</dbReference>
<dbReference type="Pfam" id="PF01386">
    <property type="entry name" value="Ribosomal_L25p"/>
    <property type="match status" value="1"/>
</dbReference>
<dbReference type="SUPFAM" id="SSF50715">
    <property type="entry name" value="Ribosomal protein L25-like"/>
    <property type="match status" value="1"/>
</dbReference>
<gene>
    <name evidence="1" type="primary">rplY</name>
    <name type="ordered locus">Sbal223_2392</name>
</gene>
<name>RL25_SHEB2</name>
<accession>B8E7C8</accession>